<gene>
    <name type="ordered locus">SAG0531</name>
</gene>
<keyword id="KW-0067">ATP-binding</keyword>
<keyword id="KW-0342">GTP-binding</keyword>
<keyword id="KW-0547">Nucleotide-binding</keyword>
<keyword id="KW-1185">Reference proteome</keyword>
<feature type="chain" id="PRO_0000107766" description="Nucleotide-binding protein SAG0531">
    <location>
        <begin position="1"/>
        <end position="296"/>
    </location>
</feature>
<feature type="binding site" evidence="1">
    <location>
        <begin position="13"/>
        <end position="20"/>
    </location>
    <ligand>
        <name>ATP</name>
        <dbReference type="ChEBI" id="CHEBI:30616"/>
    </ligand>
</feature>
<feature type="binding site" evidence="1">
    <location>
        <begin position="63"/>
        <end position="66"/>
    </location>
    <ligand>
        <name>GTP</name>
        <dbReference type="ChEBI" id="CHEBI:37565"/>
    </ligand>
</feature>
<proteinExistence type="inferred from homology"/>
<protein>
    <recommendedName>
        <fullName evidence="1">Nucleotide-binding protein SAG0531</fullName>
    </recommendedName>
</protein>
<reference key="1">
    <citation type="journal article" date="2002" name="Proc. Natl. Acad. Sci. U.S.A.">
        <title>Complete genome sequence and comparative genomic analysis of an emerging human pathogen, serotype V Streptococcus agalactiae.</title>
        <authorList>
            <person name="Tettelin H."/>
            <person name="Masignani V."/>
            <person name="Cieslewicz M.J."/>
            <person name="Eisen J.A."/>
            <person name="Peterson S.N."/>
            <person name="Wessels M.R."/>
            <person name="Paulsen I.T."/>
            <person name="Nelson K.E."/>
            <person name="Margarit I."/>
            <person name="Read T.D."/>
            <person name="Madoff L.C."/>
            <person name="Wolf A.M."/>
            <person name="Beanan M.J."/>
            <person name="Brinkac L.M."/>
            <person name="Daugherty S.C."/>
            <person name="DeBoy R.T."/>
            <person name="Durkin A.S."/>
            <person name="Kolonay J.F."/>
            <person name="Madupu R."/>
            <person name="Lewis M.R."/>
            <person name="Radune D."/>
            <person name="Fedorova N.B."/>
            <person name="Scanlan D."/>
            <person name="Khouri H.M."/>
            <person name="Mulligan S."/>
            <person name="Carty H.A."/>
            <person name="Cline R.T."/>
            <person name="Van Aken S.E."/>
            <person name="Gill J."/>
            <person name="Scarselli M."/>
            <person name="Mora M."/>
            <person name="Iacobini E.T."/>
            <person name="Brettoni C."/>
            <person name="Galli G."/>
            <person name="Mariani M."/>
            <person name="Vegni F."/>
            <person name="Maione D."/>
            <person name="Rinaudo D."/>
            <person name="Rappuoli R."/>
            <person name="Telford J.L."/>
            <person name="Kasper D.L."/>
            <person name="Grandi G."/>
            <person name="Fraser C.M."/>
        </authorList>
    </citation>
    <scope>NUCLEOTIDE SEQUENCE [LARGE SCALE GENOMIC DNA]</scope>
    <source>
        <strain>ATCC BAA-611 / 2603 V/R</strain>
    </source>
</reference>
<comment type="function">
    <text evidence="1">Displays ATPase and GTPase activities.</text>
</comment>
<comment type="similarity">
    <text evidence="1">Belongs to the RapZ-like family.</text>
</comment>
<organism>
    <name type="scientific">Streptococcus agalactiae serotype V (strain ATCC BAA-611 / 2603 V/R)</name>
    <dbReference type="NCBI Taxonomy" id="208435"/>
    <lineage>
        <taxon>Bacteria</taxon>
        <taxon>Bacillati</taxon>
        <taxon>Bacillota</taxon>
        <taxon>Bacilli</taxon>
        <taxon>Lactobacillales</taxon>
        <taxon>Streptococcaceae</taxon>
        <taxon>Streptococcus</taxon>
    </lineage>
</organism>
<dbReference type="EMBL" id="AE009948">
    <property type="protein sequence ID" value="AAM99432.1"/>
    <property type="molecule type" value="Genomic_DNA"/>
</dbReference>
<dbReference type="RefSeq" id="NP_687560.1">
    <property type="nucleotide sequence ID" value="NC_004116.1"/>
</dbReference>
<dbReference type="SMR" id="P67112"/>
<dbReference type="STRING" id="208435.SAG0531"/>
<dbReference type="KEGG" id="sag:SAG0531"/>
<dbReference type="PATRIC" id="fig|208435.3.peg.527"/>
<dbReference type="HOGENOM" id="CLU_059558_0_0_9"/>
<dbReference type="OrthoDB" id="9784461at2"/>
<dbReference type="Proteomes" id="UP000000821">
    <property type="component" value="Chromosome"/>
</dbReference>
<dbReference type="GO" id="GO:0005524">
    <property type="term" value="F:ATP binding"/>
    <property type="evidence" value="ECO:0007669"/>
    <property type="project" value="UniProtKB-UniRule"/>
</dbReference>
<dbReference type="GO" id="GO:0005525">
    <property type="term" value="F:GTP binding"/>
    <property type="evidence" value="ECO:0007669"/>
    <property type="project" value="UniProtKB-UniRule"/>
</dbReference>
<dbReference type="Gene3D" id="3.40.50.300">
    <property type="entry name" value="P-loop containing nucleotide triphosphate hydrolases"/>
    <property type="match status" value="1"/>
</dbReference>
<dbReference type="HAMAP" id="MF_00636">
    <property type="entry name" value="RapZ_like"/>
    <property type="match status" value="1"/>
</dbReference>
<dbReference type="InterPro" id="IPR027417">
    <property type="entry name" value="P-loop_NTPase"/>
</dbReference>
<dbReference type="InterPro" id="IPR005337">
    <property type="entry name" value="RapZ-like"/>
</dbReference>
<dbReference type="InterPro" id="IPR053930">
    <property type="entry name" value="RapZ-like_N"/>
</dbReference>
<dbReference type="InterPro" id="IPR053931">
    <property type="entry name" value="RapZ_C"/>
</dbReference>
<dbReference type="NCBIfam" id="NF003828">
    <property type="entry name" value="PRK05416.1"/>
    <property type="match status" value="1"/>
</dbReference>
<dbReference type="PANTHER" id="PTHR30448">
    <property type="entry name" value="RNASE ADAPTER PROTEIN RAPZ"/>
    <property type="match status" value="1"/>
</dbReference>
<dbReference type="PANTHER" id="PTHR30448:SF0">
    <property type="entry name" value="RNASE ADAPTER PROTEIN RAPZ"/>
    <property type="match status" value="1"/>
</dbReference>
<dbReference type="Pfam" id="PF22740">
    <property type="entry name" value="PapZ_C"/>
    <property type="match status" value="1"/>
</dbReference>
<dbReference type="Pfam" id="PF03668">
    <property type="entry name" value="RapZ-like_N"/>
    <property type="match status" value="1"/>
</dbReference>
<dbReference type="PIRSF" id="PIRSF005052">
    <property type="entry name" value="P-loopkin"/>
    <property type="match status" value="1"/>
</dbReference>
<dbReference type="SUPFAM" id="SSF52540">
    <property type="entry name" value="P-loop containing nucleoside triphosphate hydrolases"/>
    <property type="match status" value="1"/>
</dbReference>
<sequence length="296" mass="33524">MSDEQIKLVIVTGMSGAGKTVAIQSFEDLGYFTIDNMPPTLVPKFLELAAQSGDTSKIAMVVDMRSRLFFREINSILDSLEINDNINFKILFLDATDTELVSRYKETRRSHPLAADGRVLDGISLERELLAPLKSMSQNVVDTSELTPRQLRKVISKEFSNQDSQSSFRIEVMSFGFKYGIPLDADLVFDVRFLPNPYYKPELRDKTGLDTEVYDYVMSFDESDDFYDHLLALIKPILPGYQNEGKSVLTVAIGCTGGQHRSTAFAHRLSEDLKADWTVNESHRDKNKRKETVNRS</sequence>
<accession>P67112</accession>
<accession>Q8E132</accession>
<accession>Q8E6I7</accession>
<evidence type="ECO:0000255" key="1">
    <source>
        <dbReference type="HAMAP-Rule" id="MF_00636"/>
    </source>
</evidence>
<name>Y531_STRA5</name>